<dbReference type="PIR" id="S07770">
    <property type="entry name" value="S07770"/>
</dbReference>
<dbReference type="GO" id="GO:0000786">
    <property type="term" value="C:nucleosome"/>
    <property type="evidence" value="ECO:0007669"/>
    <property type="project" value="UniProtKB-KW"/>
</dbReference>
<dbReference type="GO" id="GO:0005634">
    <property type="term" value="C:nucleus"/>
    <property type="evidence" value="ECO:0007669"/>
    <property type="project" value="UniProtKB-SubCell"/>
</dbReference>
<dbReference type="GO" id="GO:0003677">
    <property type="term" value="F:DNA binding"/>
    <property type="evidence" value="ECO:0007669"/>
    <property type="project" value="UniProtKB-KW"/>
</dbReference>
<reference key="1">
    <citation type="journal article" date="1990" name="Eur. J. Biochem.">
        <title>Core histone-DNA interactions in sea urchin sperm chromatin. The N-terminal tail of H2B interacts with linker DNA.</title>
        <authorList>
            <person name="Hill C.S."/>
            <person name="Thomas J.O."/>
        </authorList>
    </citation>
    <scope>PROTEIN SEQUENCE OF 2-26</scope>
</reference>
<sequence>MPSQKSPTKRSPTKRSPQKGGKGAKR</sequence>
<accession>P13281</accession>
<name>H2BS1_ECHES</name>
<keyword id="KW-0158">Chromosome</keyword>
<keyword id="KW-0903">Direct protein sequencing</keyword>
<keyword id="KW-0238">DNA-binding</keyword>
<keyword id="KW-0544">Nucleosome core</keyword>
<keyword id="KW-0539">Nucleus</keyword>
<keyword id="KW-0597">Phosphoprotein</keyword>
<keyword id="KW-0832">Ubl conjugation</keyword>
<protein>
    <recommendedName>
        <fullName>Histone H2B.1, sperm</fullName>
    </recommendedName>
</protein>
<organism>
    <name type="scientific">Echinus esculentus</name>
    <name type="common">Sea urchin</name>
    <dbReference type="NCBI Taxonomy" id="7648"/>
    <lineage>
        <taxon>Eukaryota</taxon>
        <taxon>Metazoa</taxon>
        <taxon>Echinodermata</taxon>
        <taxon>Eleutherozoa</taxon>
        <taxon>Echinozoa</taxon>
        <taxon>Echinoidea</taxon>
        <taxon>Euechinoidea</taxon>
        <taxon>Echinacea</taxon>
        <taxon>Camarodonta</taxon>
        <taxon>Echinidea</taxon>
        <taxon>Echinidae</taxon>
        <taxon>Echinus</taxon>
    </lineage>
</organism>
<comment type="function">
    <text>Core component of nucleosome. Nucleosomes wrap and compact DNA into chromatin, limiting DNA accessibility to the cellular machineries which require DNA as a template. Histones thereby play a central role in transcription regulation, DNA repair, DNA replication and chromosomal stability. DNA accessibility is regulated via a complex set of post-translational modifications of histones, also called histone code, and nucleosome remodeling.</text>
</comment>
<comment type="subunit">
    <text>The nucleosome is a histone octamer containing two molecules each of H2A, H2B, H3 and H4 assembled in one H3-H4 heterotetramer and two H2A-H2B heterodimers. The octamer wraps approximately 147 bp of DNA.</text>
</comment>
<comment type="subcellular location">
    <subcellularLocation>
        <location>Nucleus</location>
    </subcellularLocation>
    <subcellularLocation>
        <location>Chromosome</location>
    </subcellularLocation>
</comment>
<comment type="domain">
    <text>Contains 3 SPKK motifs which may interact with the minor groove of A/T-rich DNA sites. Phosphorylation of this motif may regulate DNA binding. This motif is reiterated in both termini of histone H1 and in the C-terminus of plant H2A, but its presence in the N-terminus seems to be unique to sea urchin histones H2B.</text>
</comment>
<comment type="PTM">
    <text evidence="1">Monoubiquitination gives a specific tag for epigenetic transcriptional activation and is also prerequisite for histone H3 'Lys-4' and 'Lys-79' methylation.</text>
</comment>
<comment type="PTM">
    <text evidence="1">Phosphorylated on SPKK motifs 2 and 3; which may regulate DNA binding. Dephosphorylated during maturation of spermatids to mature sperm and rephosphorylated at fertilization (By similarity).</text>
</comment>
<comment type="similarity">
    <text evidence="4">Belongs to the histone H2B family.</text>
</comment>
<feature type="initiator methionine" description="Removed" evidence="3">
    <location>
        <position position="1"/>
    </location>
</feature>
<feature type="chain" id="PRO_0000071883" description="Histone H2B.1, sperm">
    <location>
        <begin position="2"/>
        <end position="26" status="greater than"/>
    </location>
</feature>
<feature type="region of interest" description="Disordered" evidence="2">
    <location>
        <begin position="1"/>
        <end position="26"/>
    </location>
</feature>
<feature type="short sequence motif" description="SPKK motif 1">
    <location>
        <begin position="6"/>
        <end position="9"/>
    </location>
</feature>
<feature type="short sequence motif" description="SPKK motif 2">
    <location>
        <begin position="11"/>
        <end position="14"/>
    </location>
</feature>
<feature type="short sequence motif" description="SPKK motif 3">
    <location>
        <begin position="16"/>
        <end position="19"/>
    </location>
</feature>
<feature type="compositionally biased region" description="Basic residues" evidence="2">
    <location>
        <begin position="7"/>
        <end position="26"/>
    </location>
</feature>
<feature type="modified residue" description="Phosphoserine" evidence="1">
    <location>
        <position position="11"/>
    </location>
</feature>
<feature type="modified residue" description="Phosphoserine" evidence="1">
    <location>
        <position position="16"/>
    </location>
</feature>
<feature type="non-terminal residue">
    <location>
        <position position="26"/>
    </location>
</feature>
<proteinExistence type="evidence at protein level"/>
<evidence type="ECO:0000250" key="1"/>
<evidence type="ECO:0000256" key="2">
    <source>
        <dbReference type="SAM" id="MobiDB-lite"/>
    </source>
</evidence>
<evidence type="ECO:0000269" key="3">
    <source>
    </source>
</evidence>
<evidence type="ECO:0000305" key="4"/>